<name>ISPDF_RUEPO</name>
<comment type="function">
    <text evidence="1">Bifunctional enzyme that catalyzes the formation of 4-diphosphocytidyl-2-C-methyl-D-erythritol from CTP and 2-C-methyl-D-erythritol 4-phosphate (MEP) (IspD), and catalyzes the conversion of 4-diphosphocytidyl-2-C-methyl-D-erythritol 2-phosphate (CDP-ME2P) to 2-C-methyl-D-erythritol 2,4-cyclodiphosphate (ME-CPP) with a corresponding release of cytidine 5-monophosphate (CMP) (IspF).</text>
</comment>
<comment type="catalytic activity">
    <reaction evidence="1">
        <text>2-C-methyl-D-erythritol 4-phosphate + CTP + H(+) = 4-CDP-2-C-methyl-D-erythritol + diphosphate</text>
        <dbReference type="Rhea" id="RHEA:13429"/>
        <dbReference type="ChEBI" id="CHEBI:15378"/>
        <dbReference type="ChEBI" id="CHEBI:33019"/>
        <dbReference type="ChEBI" id="CHEBI:37563"/>
        <dbReference type="ChEBI" id="CHEBI:57823"/>
        <dbReference type="ChEBI" id="CHEBI:58262"/>
        <dbReference type="EC" id="2.7.7.60"/>
    </reaction>
</comment>
<comment type="catalytic activity">
    <reaction evidence="1">
        <text>4-CDP-2-C-methyl-D-erythritol 2-phosphate = 2-C-methyl-D-erythritol 2,4-cyclic diphosphate + CMP</text>
        <dbReference type="Rhea" id="RHEA:23864"/>
        <dbReference type="ChEBI" id="CHEBI:57919"/>
        <dbReference type="ChEBI" id="CHEBI:58483"/>
        <dbReference type="ChEBI" id="CHEBI:60377"/>
        <dbReference type="EC" id="4.6.1.12"/>
    </reaction>
</comment>
<comment type="cofactor">
    <cofactor evidence="1">
        <name>a divalent metal cation</name>
        <dbReference type="ChEBI" id="CHEBI:60240"/>
    </cofactor>
</comment>
<comment type="pathway">
    <text evidence="1">Isoprenoid biosynthesis; isopentenyl diphosphate biosynthesis via DXP pathway; isopentenyl diphosphate from 1-deoxy-D-xylulose 5-phosphate: step 2/6.</text>
</comment>
<comment type="pathway">
    <text evidence="1">Isoprenoid biosynthesis; isopentenyl diphosphate biosynthesis via DXP pathway; isopentenyl diphosphate from 1-deoxy-D-xylulose 5-phosphate: step 4/6.</text>
</comment>
<comment type="similarity">
    <text evidence="1">In the N-terminal section; belongs to the IspD/TarI cytidylyltransferase family. IspD subfamily.</text>
</comment>
<comment type="similarity">
    <text evidence="1">In the C-terminal section; belongs to the IspF family.</text>
</comment>
<comment type="sequence caution" evidence="2">
    <conflict type="erroneous initiation">
        <sequence resource="EMBL-CDS" id="AAV95361"/>
    </conflict>
    <text>Truncated N-terminus.</text>
</comment>
<protein>
    <recommendedName>
        <fullName evidence="1">Bifunctional enzyme IspD/IspF</fullName>
    </recommendedName>
    <domain>
        <recommendedName>
            <fullName evidence="1">2-C-methyl-D-erythritol 4-phosphate cytidylyltransferase</fullName>
            <ecNumber evidence="1">2.7.7.60</ecNumber>
        </recommendedName>
        <alternativeName>
            <fullName evidence="1">4-diphosphocytidyl-2C-methyl-D-erythritol synthase</fullName>
        </alternativeName>
        <alternativeName>
            <fullName evidence="1">MEP cytidylyltransferase</fullName>
            <shortName evidence="1">MCT</shortName>
        </alternativeName>
    </domain>
    <domain>
        <recommendedName>
            <fullName evidence="1">2-C-methyl-D-erythritol 2,4-cyclodiphosphate synthase</fullName>
            <shortName evidence="1">MECDP-synthase</shortName>
            <shortName evidence="1">MECPP-synthase</shortName>
            <shortName evidence="1">MECPS</shortName>
            <ecNumber evidence="1">4.6.1.12</ecNumber>
        </recommendedName>
    </domain>
</protein>
<accession>Q5LRN5</accession>
<reference key="1">
    <citation type="journal article" date="2004" name="Nature">
        <title>Genome sequence of Silicibacter pomeroyi reveals adaptations to the marine environment.</title>
        <authorList>
            <person name="Moran M.A."/>
            <person name="Buchan A."/>
            <person name="Gonzalez J.M."/>
            <person name="Heidelberg J.F."/>
            <person name="Whitman W.B."/>
            <person name="Kiene R.P."/>
            <person name="Henriksen J.R."/>
            <person name="King G.M."/>
            <person name="Belas R."/>
            <person name="Fuqua C."/>
            <person name="Brinkac L.M."/>
            <person name="Lewis M."/>
            <person name="Johri S."/>
            <person name="Weaver B."/>
            <person name="Pai G."/>
            <person name="Eisen J.A."/>
            <person name="Rahe E."/>
            <person name="Sheldon W.M."/>
            <person name="Ye W."/>
            <person name="Miller T.R."/>
            <person name="Carlton J."/>
            <person name="Rasko D.A."/>
            <person name="Paulsen I.T."/>
            <person name="Ren Q."/>
            <person name="Daugherty S.C."/>
            <person name="DeBoy R.T."/>
            <person name="Dodson R.J."/>
            <person name="Durkin A.S."/>
            <person name="Madupu R."/>
            <person name="Nelson W.C."/>
            <person name="Sullivan S.A."/>
            <person name="Rosovitz M.J."/>
            <person name="Haft D.H."/>
            <person name="Selengut J."/>
            <person name="Ward N."/>
        </authorList>
    </citation>
    <scope>NUCLEOTIDE SEQUENCE [LARGE SCALE GENOMIC DNA]</scope>
    <source>
        <strain>ATCC 700808 / DSM 15171 / DSS-3</strain>
    </source>
</reference>
<reference key="2">
    <citation type="journal article" date="2014" name="Stand. Genomic Sci.">
        <title>An updated genome annotation for the model marine bacterium Ruegeria pomeroyi DSS-3.</title>
        <authorList>
            <person name="Rivers A.R."/>
            <person name="Smith C.B."/>
            <person name="Moran M.A."/>
        </authorList>
    </citation>
    <scope>GENOME REANNOTATION</scope>
    <source>
        <strain>ATCC 700808 / DSM 15171 / DSS-3</strain>
    </source>
</reference>
<sequence>MTTAAIIVAAGRGTRAGGGVPKQWRPLAGRRVADWTLDRFALRQITHVVLVLHPEDHDAWDEFATTPLILAPGGSDRAGSVRNGLAALDGLGITKVLIHDVARPCVSAATIGAVLDALDAHPGAAPGLAVTDALWTGAEGLVTGTRERDGLFAAQTPQGFRYDAIVAAHAAHPGGAADDVEVARAAELTVAIVPGDPDNLKITRAEDFARAERILRQDMDVRLGNGYDVHRFGPGDHVILCGIKVPHDRGLQGHSDADVGMHAVTDALYGALVEGDIGRHFPPSDPQWKGAASEIFLRHAVDLVRARGFAVSNIDCTLVCEYPKIGPHALEMQAEMARIMGLEASRVSVKATTSERLGFTGRSEGIAALATACLVKP</sequence>
<proteinExistence type="inferred from homology"/>
<dbReference type="EC" id="2.7.7.60" evidence="1"/>
<dbReference type="EC" id="4.6.1.12" evidence="1"/>
<dbReference type="EMBL" id="CP000031">
    <property type="protein sequence ID" value="AAV95361.1"/>
    <property type="status" value="ALT_INIT"/>
    <property type="molecule type" value="Genomic_DNA"/>
</dbReference>
<dbReference type="RefSeq" id="WP_044028284.1">
    <property type="nucleotide sequence ID" value="NC_003911.12"/>
</dbReference>
<dbReference type="SMR" id="Q5LRN5"/>
<dbReference type="STRING" id="246200.SPO2090"/>
<dbReference type="PaxDb" id="246200-SPO2090"/>
<dbReference type="KEGG" id="sil:SPO2090"/>
<dbReference type="eggNOG" id="COG0245">
    <property type="taxonomic scope" value="Bacteria"/>
</dbReference>
<dbReference type="eggNOG" id="COG1211">
    <property type="taxonomic scope" value="Bacteria"/>
</dbReference>
<dbReference type="HOGENOM" id="CLU_042800_0_0_5"/>
<dbReference type="OrthoDB" id="9804336at2"/>
<dbReference type="UniPathway" id="UPA00056">
    <property type="reaction ID" value="UER00093"/>
</dbReference>
<dbReference type="UniPathway" id="UPA00056">
    <property type="reaction ID" value="UER00095"/>
</dbReference>
<dbReference type="Proteomes" id="UP000001023">
    <property type="component" value="Chromosome"/>
</dbReference>
<dbReference type="GO" id="GO:0008685">
    <property type="term" value="F:2-C-methyl-D-erythritol 2,4-cyclodiphosphate synthase activity"/>
    <property type="evidence" value="ECO:0007669"/>
    <property type="project" value="UniProtKB-UniRule"/>
</dbReference>
<dbReference type="GO" id="GO:0050518">
    <property type="term" value="F:2-C-methyl-D-erythritol 4-phosphate cytidylyltransferase activity"/>
    <property type="evidence" value="ECO:0007669"/>
    <property type="project" value="UniProtKB-UniRule"/>
</dbReference>
<dbReference type="GO" id="GO:0046872">
    <property type="term" value="F:metal ion binding"/>
    <property type="evidence" value="ECO:0007669"/>
    <property type="project" value="UniProtKB-KW"/>
</dbReference>
<dbReference type="GO" id="GO:0019288">
    <property type="term" value="P:isopentenyl diphosphate biosynthetic process, methylerythritol 4-phosphate pathway"/>
    <property type="evidence" value="ECO:0007669"/>
    <property type="project" value="UniProtKB-UniRule"/>
</dbReference>
<dbReference type="GO" id="GO:0016114">
    <property type="term" value="P:terpenoid biosynthetic process"/>
    <property type="evidence" value="ECO:0007669"/>
    <property type="project" value="InterPro"/>
</dbReference>
<dbReference type="CDD" id="cd02516">
    <property type="entry name" value="CDP-ME_synthetase"/>
    <property type="match status" value="1"/>
</dbReference>
<dbReference type="CDD" id="cd00554">
    <property type="entry name" value="MECDP_synthase"/>
    <property type="match status" value="1"/>
</dbReference>
<dbReference type="FunFam" id="3.30.1330.50:FF:000003">
    <property type="entry name" value="2-C-methyl-D-erythritol 2,4-cyclodiphosphate synthase"/>
    <property type="match status" value="1"/>
</dbReference>
<dbReference type="Gene3D" id="3.30.1330.50">
    <property type="entry name" value="2-C-methyl-D-erythritol 2,4-cyclodiphosphate synthase"/>
    <property type="match status" value="1"/>
</dbReference>
<dbReference type="Gene3D" id="3.90.550.10">
    <property type="entry name" value="Spore Coat Polysaccharide Biosynthesis Protein SpsA, Chain A"/>
    <property type="match status" value="1"/>
</dbReference>
<dbReference type="HAMAP" id="MF_00108">
    <property type="entry name" value="IspD"/>
    <property type="match status" value="1"/>
</dbReference>
<dbReference type="HAMAP" id="MF_01520">
    <property type="entry name" value="IspDF"/>
    <property type="match status" value="1"/>
</dbReference>
<dbReference type="HAMAP" id="MF_00107">
    <property type="entry name" value="IspF"/>
    <property type="match status" value="1"/>
</dbReference>
<dbReference type="InterPro" id="IPR001228">
    <property type="entry name" value="IspD"/>
</dbReference>
<dbReference type="InterPro" id="IPR026596">
    <property type="entry name" value="IspD/F"/>
</dbReference>
<dbReference type="InterPro" id="IPR034683">
    <property type="entry name" value="IspD/TarI"/>
</dbReference>
<dbReference type="InterPro" id="IPR018294">
    <property type="entry name" value="ISPD_synthase_CS"/>
</dbReference>
<dbReference type="InterPro" id="IPR003526">
    <property type="entry name" value="MECDP_synthase"/>
</dbReference>
<dbReference type="InterPro" id="IPR020555">
    <property type="entry name" value="MECDP_synthase_CS"/>
</dbReference>
<dbReference type="InterPro" id="IPR036571">
    <property type="entry name" value="MECDP_synthase_sf"/>
</dbReference>
<dbReference type="InterPro" id="IPR029044">
    <property type="entry name" value="Nucleotide-diphossugar_trans"/>
</dbReference>
<dbReference type="NCBIfam" id="TIGR00151">
    <property type="entry name" value="ispF"/>
    <property type="match status" value="1"/>
</dbReference>
<dbReference type="NCBIfam" id="NF006899">
    <property type="entry name" value="PRK09382.1"/>
    <property type="match status" value="1"/>
</dbReference>
<dbReference type="PANTHER" id="PTHR43181">
    <property type="entry name" value="2-C-METHYL-D-ERYTHRITOL 2,4-CYCLODIPHOSPHATE SYNTHASE, CHLOROPLASTIC"/>
    <property type="match status" value="1"/>
</dbReference>
<dbReference type="PANTHER" id="PTHR43181:SF1">
    <property type="entry name" value="2-C-METHYL-D-ERYTHRITOL 2,4-CYCLODIPHOSPHATE SYNTHASE, CHLOROPLASTIC"/>
    <property type="match status" value="1"/>
</dbReference>
<dbReference type="Pfam" id="PF01128">
    <property type="entry name" value="IspD"/>
    <property type="match status" value="1"/>
</dbReference>
<dbReference type="Pfam" id="PF02542">
    <property type="entry name" value="YgbB"/>
    <property type="match status" value="1"/>
</dbReference>
<dbReference type="SUPFAM" id="SSF69765">
    <property type="entry name" value="IpsF-like"/>
    <property type="match status" value="1"/>
</dbReference>
<dbReference type="SUPFAM" id="SSF53448">
    <property type="entry name" value="Nucleotide-diphospho-sugar transferases"/>
    <property type="match status" value="1"/>
</dbReference>
<dbReference type="PROSITE" id="PS01295">
    <property type="entry name" value="ISPD"/>
    <property type="match status" value="1"/>
</dbReference>
<dbReference type="PROSITE" id="PS01350">
    <property type="entry name" value="ISPF"/>
    <property type="match status" value="1"/>
</dbReference>
<keyword id="KW-0414">Isoprene biosynthesis</keyword>
<keyword id="KW-0456">Lyase</keyword>
<keyword id="KW-0479">Metal-binding</keyword>
<keyword id="KW-0511">Multifunctional enzyme</keyword>
<keyword id="KW-0548">Nucleotidyltransferase</keyword>
<keyword id="KW-1185">Reference proteome</keyword>
<keyword id="KW-0808">Transferase</keyword>
<gene>
    <name evidence="1" type="primary">ispDF</name>
    <name type="ordered locus">SPO2090</name>
</gene>
<feature type="chain" id="PRO_0000075677" description="Bifunctional enzyme IspD/IspF">
    <location>
        <begin position="1"/>
        <end position="377"/>
    </location>
</feature>
<feature type="region of interest" description="2-C-methyl-D-erythritol 4-phosphate cytidylyltransferase" evidence="1">
    <location>
        <begin position="1"/>
        <end position="221"/>
    </location>
</feature>
<feature type="region of interest" description="2-C-methyl-D-erythritol 2,4-cyclodiphosphate synthase" evidence="1">
    <location>
        <begin position="222"/>
        <end position="377"/>
    </location>
</feature>
<feature type="binding site" evidence="1">
    <location>
        <begin position="228"/>
        <end position="230"/>
    </location>
    <ligand>
        <name>4-CDP-2-C-methyl-D-erythritol 2-phosphate</name>
        <dbReference type="ChEBI" id="CHEBI:57919"/>
    </ligand>
</feature>
<feature type="binding site" evidence="1">
    <location>
        <position position="228"/>
    </location>
    <ligand>
        <name>a divalent metal cation</name>
        <dbReference type="ChEBI" id="CHEBI:60240"/>
    </ligand>
</feature>
<feature type="binding site" evidence="1">
    <location>
        <position position="230"/>
    </location>
    <ligand>
        <name>a divalent metal cation</name>
        <dbReference type="ChEBI" id="CHEBI:60240"/>
    </ligand>
</feature>
<feature type="binding site" evidence="1">
    <location>
        <begin position="254"/>
        <end position="255"/>
    </location>
    <ligand>
        <name>4-CDP-2-C-methyl-D-erythritol 2-phosphate</name>
        <dbReference type="ChEBI" id="CHEBI:57919"/>
    </ligand>
</feature>
<feature type="binding site" evidence="1">
    <location>
        <position position="262"/>
    </location>
    <ligand>
        <name>a divalent metal cation</name>
        <dbReference type="ChEBI" id="CHEBI:60240"/>
    </ligand>
</feature>
<feature type="binding site" evidence="1">
    <location>
        <begin position="276"/>
        <end position="278"/>
    </location>
    <ligand>
        <name>4-CDP-2-C-methyl-D-erythritol 2-phosphate</name>
        <dbReference type="ChEBI" id="CHEBI:57919"/>
    </ligand>
</feature>
<feature type="binding site" evidence="1">
    <location>
        <begin position="352"/>
        <end position="355"/>
    </location>
    <ligand>
        <name>4-CDP-2-C-methyl-D-erythritol 2-phosphate</name>
        <dbReference type="ChEBI" id="CHEBI:57919"/>
    </ligand>
</feature>
<feature type="binding site" evidence="1">
    <location>
        <position position="359"/>
    </location>
    <ligand>
        <name>4-CDP-2-C-methyl-D-erythritol 2-phosphate</name>
        <dbReference type="ChEBI" id="CHEBI:57919"/>
    </ligand>
</feature>
<feature type="binding site" evidence="1">
    <location>
        <position position="362"/>
    </location>
    <ligand>
        <name>4-CDP-2-C-methyl-D-erythritol 2-phosphate</name>
        <dbReference type="ChEBI" id="CHEBI:57919"/>
    </ligand>
</feature>
<feature type="site" description="Transition state stabilizer" evidence="1">
    <location>
        <position position="15"/>
    </location>
</feature>
<feature type="site" description="Transition state stabilizer" evidence="1">
    <location>
        <position position="22"/>
    </location>
</feature>
<feature type="site" description="Positions MEP for the nucleophilic attack" evidence="1">
    <location>
        <position position="148"/>
    </location>
</feature>
<feature type="site" description="Positions MEP for the nucleophilic attack" evidence="1">
    <location>
        <position position="201"/>
    </location>
</feature>
<feature type="site" description="Transition state stabilizer" evidence="1">
    <location>
        <position position="254"/>
    </location>
</feature>
<feature type="site" description="Transition state stabilizer" evidence="1">
    <location>
        <position position="353"/>
    </location>
</feature>
<evidence type="ECO:0000255" key="1">
    <source>
        <dbReference type="HAMAP-Rule" id="MF_01520"/>
    </source>
</evidence>
<evidence type="ECO:0000305" key="2"/>
<organism>
    <name type="scientific">Ruegeria pomeroyi (strain ATCC 700808 / DSM 15171 / DSS-3)</name>
    <name type="common">Silicibacter pomeroyi</name>
    <dbReference type="NCBI Taxonomy" id="246200"/>
    <lineage>
        <taxon>Bacteria</taxon>
        <taxon>Pseudomonadati</taxon>
        <taxon>Pseudomonadota</taxon>
        <taxon>Alphaproteobacteria</taxon>
        <taxon>Rhodobacterales</taxon>
        <taxon>Roseobacteraceae</taxon>
        <taxon>Ruegeria</taxon>
    </lineage>
</organism>